<organism>
    <name type="scientific">Oncorhynchus mykiss</name>
    <name type="common">Rainbow trout</name>
    <name type="synonym">Salmo gairdneri</name>
    <dbReference type="NCBI Taxonomy" id="8022"/>
    <lineage>
        <taxon>Eukaryota</taxon>
        <taxon>Metazoa</taxon>
        <taxon>Chordata</taxon>
        <taxon>Craniata</taxon>
        <taxon>Vertebrata</taxon>
        <taxon>Euteleostomi</taxon>
        <taxon>Actinopterygii</taxon>
        <taxon>Neopterygii</taxon>
        <taxon>Teleostei</taxon>
        <taxon>Protacanthopterygii</taxon>
        <taxon>Salmoniformes</taxon>
        <taxon>Salmonidae</taxon>
        <taxon>Salmoninae</taxon>
        <taxon>Oncorhynchus</taxon>
    </lineage>
</organism>
<name>TSHB_ONCMY</name>
<feature type="signal peptide" evidence="3">
    <location>
        <begin position="1"/>
        <end position="20"/>
    </location>
</feature>
<feature type="chain" id="PRO_0000011759" description="Thyrotropin subunit beta">
    <location>
        <begin position="21"/>
        <end position="147"/>
    </location>
</feature>
<feature type="glycosylation site" description="N-linked (GlcNAc...) asparagine" evidence="2">
    <location>
        <position position="43"/>
    </location>
</feature>
<feature type="disulfide bond" evidence="1">
    <location>
        <begin position="22"/>
        <end position="72"/>
    </location>
</feature>
<feature type="disulfide bond" evidence="1">
    <location>
        <begin position="36"/>
        <end position="87"/>
    </location>
</feature>
<feature type="disulfide bond" evidence="1">
    <location>
        <begin position="39"/>
        <end position="127"/>
    </location>
</feature>
<feature type="disulfide bond" evidence="1">
    <location>
        <begin position="47"/>
        <end position="103"/>
    </location>
</feature>
<feature type="disulfide bond" evidence="1">
    <location>
        <begin position="51"/>
        <end position="105"/>
    </location>
</feature>
<feature type="disulfide bond" evidence="1">
    <location>
        <begin position="108"/>
        <end position="115"/>
    </location>
</feature>
<keyword id="KW-0903">Direct protein sequencing</keyword>
<keyword id="KW-1015">Disulfide bond</keyword>
<keyword id="KW-0325">Glycoprotein</keyword>
<keyword id="KW-0372">Hormone</keyword>
<keyword id="KW-0964">Secreted</keyword>
<keyword id="KW-0732">Signal</keyword>
<accession>P37240</accession>
<gene>
    <name type="primary">tshb</name>
</gene>
<dbReference type="EMBL" id="D14692">
    <property type="protein sequence ID" value="BAA03518.1"/>
    <property type="molecule type" value="mRNA"/>
</dbReference>
<dbReference type="PIR" id="A48194">
    <property type="entry name" value="A48194"/>
</dbReference>
<dbReference type="RefSeq" id="NP_001118015.1">
    <property type="nucleotide sequence ID" value="NM_001124543.1"/>
</dbReference>
<dbReference type="SMR" id="P37240"/>
<dbReference type="GlyCosmos" id="P37240">
    <property type="glycosylation" value="1 site, No reported glycans"/>
</dbReference>
<dbReference type="Ensembl" id="ENSOMYT00000076225.2">
    <property type="protein sequence ID" value="ENSOMYP00000069997.1"/>
    <property type="gene ID" value="ENSOMYG00000032448.2"/>
</dbReference>
<dbReference type="GeneID" id="100136289"/>
<dbReference type="KEGG" id="omy:100136289"/>
<dbReference type="CTD" id="353223"/>
<dbReference type="GeneTree" id="ENSGT00940000158152"/>
<dbReference type="OrthoDB" id="8866353at2759"/>
<dbReference type="Proteomes" id="UP000694395">
    <property type="component" value="Chromosome 7"/>
</dbReference>
<dbReference type="GO" id="GO:0005737">
    <property type="term" value="C:cytoplasm"/>
    <property type="evidence" value="ECO:0007669"/>
    <property type="project" value="TreeGrafter"/>
</dbReference>
<dbReference type="GO" id="GO:0005615">
    <property type="term" value="C:extracellular space"/>
    <property type="evidence" value="ECO:0007669"/>
    <property type="project" value="TreeGrafter"/>
</dbReference>
<dbReference type="GO" id="GO:0005179">
    <property type="term" value="F:hormone activity"/>
    <property type="evidence" value="ECO:0007669"/>
    <property type="project" value="UniProtKB-KW"/>
</dbReference>
<dbReference type="GO" id="GO:0007186">
    <property type="term" value="P:G protein-coupled receptor signaling pathway"/>
    <property type="evidence" value="ECO:0007669"/>
    <property type="project" value="TreeGrafter"/>
</dbReference>
<dbReference type="CDD" id="cd00069">
    <property type="entry name" value="GHB_like"/>
    <property type="match status" value="1"/>
</dbReference>
<dbReference type="FunFam" id="2.10.90.10:FF:000007">
    <property type="entry name" value="Luteinizing hormone beta subunit"/>
    <property type="match status" value="1"/>
</dbReference>
<dbReference type="Gene3D" id="2.10.90.10">
    <property type="entry name" value="Cystine-knot cytokines"/>
    <property type="match status" value="1"/>
</dbReference>
<dbReference type="InterPro" id="IPR029034">
    <property type="entry name" value="Cystine-knot_cytokine"/>
</dbReference>
<dbReference type="InterPro" id="IPR006208">
    <property type="entry name" value="Glyco_hormone_CN"/>
</dbReference>
<dbReference type="InterPro" id="IPR001545">
    <property type="entry name" value="Gonadotropin_bsu"/>
</dbReference>
<dbReference type="InterPro" id="IPR018245">
    <property type="entry name" value="Gonadotropin_bsu_CS"/>
</dbReference>
<dbReference type="PANTHER" id="PTHR11515">
    <property type="entry name" value="GLYCOPROTEIN HORMONE BETA CHAIN"/>
    <property type="match status" value="1"/>
</dbReference>
<dbReference type="PANTHER" id="PTHR11515:SF5">
    <property type="entry name" value="THYROTROPIN SUBUNIT BETA"/>
    <property type="match status" value="1"/>
</dbReference>
<dbReference type="Pfam" id="PF00007">
    <property type="entry name" value="Cys_knot"/>
    <property type="match status" value="1"/>
</dbReference>
<dbReference type="SMART" id="SM00068">
    <property type="entry name" value="GHB"/>
    <property type="match status" value="1"/>
</dbReference>
<dbReference type="SUPFAM" id="SSF57501">
    <property type="entry name" value="Cystine-knot cytokines"/>
    <property type="match status" value="1"/>
</dbReference>
<dbReference type="PROSITE" id="PS00261">
    <property type="entry name" value="GLYCO_HORMONE_BETA_1"/>
    <property type="match status" value="1"/>
</dbReference>
<dbReference type="PROSITE" id="PS00689">
    <property type="entry name" value="GLYCO_HORMONE_BETA_2"/>
    <property type="match status" value="1"/>
</dbReference>
<comment type="function">
    <text>Indispensable for the control of thyroid structure and metabolism. May play some role in the biological processes of the immature fishes.</text>
</comment>
<comment type="subunit">
    <text>Heterodimer of a common alpha chain and a unique beta chain which confers biological specificity to thyrotropin, lutropin, follitropin and gonadotropin.</text>
</comment>
<comment type="subcellular location">
    <subcellularLocation>
        <location>Secreted</location>
    </subcellularLocation>
</comment>
<comment type="tissue specificity">
    <text>Pituitary gland. Higher levels seen in immature fishes than the mature fishes.</text>
</comment>
<comment type="similarity">
    <text evidence="4">Belongs to the glycoprotein hormones subunit beta family.</text>
</comment>
<comment type="caution">
    <text evidence="4">It is uncertain whether Met-1 or Met-7 is the initiator.</text>
</comment>
<reference key="1">
    <citation type="journal article" date="1993" name="Proc. Natl. Acad. Sci. U.S.A.">
        <title>cDNA cloning of the beta subunit of teleost thyrotropin.</title>
        <authorList>
            <person name="Ito M."/>
            <person name="Koide Y."/>
            <person name="Takamatsu N."/>
            <person name="Kawauchi H."/>
            <person name="Shiba T."/>
        </authorList>
    </citation>
    <scope>NUCLEOTIDE SEQUENCE [MRNA]</scope>
    <scope>PROTEIN SEQUENCE OF 21-30</scope>
    <source>
        <tissue>Pituitary</tissue>
    </source>
</reference>
<evidence type="ECO:0000250" key="1"/>
<evidence type="ECO:0000255" key="2"/>
<evidence type="ECO:0000269" key="3">
    <source>
    </source>
</evidence>
<evidence type="ECO:0000305" key="4"/>
<proteinExistence type="evidence at protein level"/>
<protein>
    <recommendedName>
        <fullName>Thyrotropin subunit beta</fullName>
    </recommendedName>
    <alternativeName>
        <fullName>Thyroid-stimulating hormone subunit beta</fullName>
        <shortName>TSH-B</shortName>
        <shortName>TSH-beta</shortName>
    </alternativeName>
    <alternativeName>
        <fullName>Thyrotropin beta chain</fullName>
    </alternativeName>
</protein>
<sequence length="147" mass="16440">MELSVAMYGLLCLLFSQAVPMCVPTDYTLYEERRECDFCVAINTTICMGFCYSRDSNMKELAGPRFLIQRGCTYDQVEYRTVILPGCPLHANPLFTYPVALSCHCGTCNTDSDECAHKASSGDGARCSKPLRHIYPYPGLNSYIHPN</sequence>